<protein>
    <recommendedName>
        <fullName>Folylpolyglutamate synthase, mitochondrial</fullName>
        <ecNumber>6.3.2.17</ecNumber>
    </recommendedName>
    <alternativeName>
        <fullName>Folylpoly-gamma-glutamate synthetase</fullName>
        <shortName>FPGS</shortName>
    </alternativeName>
    <alternativeName>
        <fullName>Tetrahydrofolylpolyglutamate synthase</fullName>
        <shortName>Tetrahydrofolate synthase</shortName>
    </alternativeName>
</protein>
<feature type="transit peptide" description="Mitochondrion">
    <location>
        <begin position="1"/>
        <end position="42"/>
    </location>
</feature>
<feature type="chain" id="PRO_0000010099" description="Folylpolyglutamate synthase, mitochondrial">
    <location>
        <begin position="43"/>
        <end position="587"/>
    </location>
</feature>
<feature type="binding site" evidence="2">
    <location>
        <begin position="106"/>
        <end position="109"/>
    </location>
    <ligand>
        <name>ATP</name>
        <dbReference type="ChEBI" id="CHEBI:30616"/>
    </ligand>
</feature>
<feature type="binding site" evidence="2">
    <location>
        <position position="130"/>
    </location>
    <ligand>
        <name>Mg(2+)</name>
        <dbReference type="ChEBI" id="CHEBI:18420"/>
        <label>1</label>
    </ligand>
</feature>
<feature type="binding site" evidence="2">
    <location>
        <position position="200"/>
    </location>
    <ligand>
        <name>Mg(2+)</name>
        <dbReference type="ChEBI" id="CHEBI:18420"/>
        <label>1</label>
    </ligand>
</feature>
<feature type="binding site" evidence="2">
    <location>
        <position position="228"/>
    </location>
    <ligand>
        <name>Mg(2+)</name>
        <dbReference type="ChEBI" id="CHEBI:18420"/>
        <label>2</label>
    </ligand>
</feature>
<feature type="binding site" evidence="2">
    <location>
        <position position="363"/>
    </location>
    <ligand>
        <name>ATP</name>
        <dbReference type="ChEBI" id="CHEBI:30616"/>
    </ligand>
</feature>
<feature type="binding site" evidence="2">
    <location>
        <position position="377"/>
    </location>
    <ligand>
        <name>ATP</name>
        <dbReference type="ChEBI" id="CHEBI:30616"/>
    </ligand>
</feature>
<feature type="modified residue" description="Phosphoserine" evidence="3">
    <location>
        <position position="539"/>
    </location>
</feature>
<feature type="splice variant" id="VSP_041962" description="In isoform 4." evidence="10">
    <original>MSWARSRLCSTLSLAAVSARGATTEGAARRGMSAWPAPQEPGMEYQ</original>
    <variation>MMKSTRSLPMSWPVREKFWWEAAMEWKDPSGSAYEAKTASFQ</variation>
    <location>
        <begin position="1"/>
        <end position="46"/>
    </location>
</feature>
<feature type="splice variant" id="VSP_041967" description="In isoform 5." evidence="10">
    <original>MSWARSRLCSTLSLAAVSARGATTEGAARRGMSAWPAPQEPGMEYQ</original>
    <variation>MEWKDPSGSAYEAKTASFQ</variation>
    <location>
        <begin position="1"/>
        <end position="46"/>
    </location>
</feature>
<feature type="splice variant" id="VSP_018734" description="In isoform 2." evidence="10">
    <location>
        <begin position="1"/>
        <end position="42"/>
    </location>
</feature>
<feature type="splice variant" id="VSP_041961" description="In isoform 3." evidence="10">
    <original>MSWARSRLCSTLSLA</original>
    <variation>MAVIRRCFSLVRENLETRI</variation>
    <location>
        <begin position="1"/>
        <end position="15"/>
    </location>
</feature>
<feature type="sequence conflict" description="In Ref. 1; AAC52812, 3; no nucleotide entry and 4; no nucleotide entry." evidence="10" ref="1 3 4">
    <original>A</original>
    <variation>P</variation>
    <location>
        <position position="27"/>
    </location>
</feature>
<feature type="sequence conflict" description="In Ref. 1; AAC52812, 3; no nucleotide entry and 4; no nucleotide entry." evidence="10" ref="1 3 4">
    <original>W</original>
    <variation>G</variation>
    <location>
        <position position="35"/>
    </location>
</feature>
<feature type="sequence conflict" description="In Ref. 2; AAC52426." evidence="10" ref="2">
    <original>QL</original>
    <variation>HV</variation>
    <location>
        <begin position="75"/>
        <end position="76"/>
    </location>
</feature>
<feature type="sequence conflict" description="In Ref. 1; AAC52812 and 3; no nucleotide entry." evidence="10" ref="1 3">
    <original>S</original>
    <variation>R</variation>
    <location>
        <position position="129"/>
    </location>
</feature>
<feature type="sequence conflict" description="In Ref. 1; AAC52812 and 3; no nucleotide entry." evidence="10" ref="1 3">
    <original>E</original>
    <variation>D</variation>
    <location>
        <position position="138"/>
    </location>
</feature>
<feature type="sequence conflict" description="In Ref. 5; BAE33941." evidence="10" ref="5">
    <original>L</original>
    <variation>M</variation>
    <location>
        <position position="464"/>
    </location>
</feature>
<feature type="sequence conflict" description="In Ref. 2; AAC52426." evidence="10" ref="2">
    <original>G</original>
    <variation>S</variation>
    <location>
        <position position="491"/>
    </location>
</feature>
<accession>P48760</accession>
<accession>A2AK69</accession>
<accession>Q3U0B4</accession>
<accession>Q99K38</accession>
<evidence type="ECO:0000250" key="1"/>
<evidence type="ECO:0000250" key="2">
    <source>
        <dbReference type="UniProtKB" id="P08192"/>
    </source>
</evidence>
<evidence type="ECO:0000250" key="3">
    <source>
        <dbReference type="UniProtKB" id="Q05932"/>
    </source>
</evidence>
<evidence type="ECO:0000269" key="4">
    <source>
    </source>
</evidence>
<evidence type="ECO:0000269" key="5">
    <source>
    </source>
</evidence>
<evidence type="ECO:0000269" key="6">
    <source>
    </source>
</evidence>
<evidence type="ECO:0000269" key="7">
    <source>
    </source>
</evidence>
<evidence type="ECO:0000269" key="8">
    <source>
    </source>
</evidence>
<evidence type="ECO:0000269" key="9">
    <source>
    </source>
</evidence>
<evidence type="ECO:0000305" key="10"/>
<keyword id="KW-0024">Alternative initiation</keyword>
<keyword id="KW-0877">Alternative promoter usage</keyword>
<keyword id="KW-0025">Alternative splicing</keyword>
<keyword id="KW-0067">ATP-binding</keyword>
<keyword id="KW-0963">Cytoplasm</keyword>
<keyword id="KW-0436">Ligase</keyword>
<keyword id="KW-0460">Magnesium</keyword>
<keyword id="KW-0472">Membrane</keyword>
<keyword id="KW-0479">Metal-binding</keyword>
<keyword id="KW-0496">Mitochondrion</keyword>
<keyword id="KW-0999">Mitochondrion inner membrane</keyword>
<keyword id="KW-0547">Nucleotide-binding</keyword>
<keyword id="KW-0554">One-carbon metabolism</keyword>
<keyword id="KW-0597">Phosphoprotein</keyword>
<keyword id="KW-1185">Reference proteome</keyword>
<keyword id="KW-0809">Transit peptide</keyword>
<sequence>MSWARSRLCSTLSLAAVSARGATTEGAARRGMSAWPAPQEPGMEYQDAVRTLNTLQTNASYLEQVKRQRSDPQAQLEAMEMYLARSGLQVEDLNRLNIIHVTGTKGKGSTCAFTERILRNYGLKTGFFSSPHMVQVRERIRINGKPISPELFTKHFWCLYNQLEEFKDDSHVSMPSYFRFLTLMAFHVFLQEKVDLAVVEVGIGGAFDCTNIIRKPVVCGVSSLGIDHTSLLGDTVEKIAWQKGGIFKPGVPAFTVVQPEGPLAVLRDRAQQIGCPLYLCPPLEALEEVGLPLSLGLEGAHQRSNAALALQLAHCWLERQDHQDIQELKVSRPSIRWQLPLAPVFRPTPHMRRGLRDTVWPGRTQILQRGPLTWYLDGAHTTSSVQACVHWYRQSLERSKRTDGGSEVHILLFNSTGDRDSAALLKLLQPCQFDYAVFCPNVTEVSSIGNADQQNFTVTLDQVLLRCLQHQQHWNGLAEKQASSNLWSSCGPDPAGPGSLLLAPHPPQPTRTSSLVFSCISHALLWISQGRDPIFQPQSLPRNLLNHPTANSGASILREAAAIHVLVTGSLHLVGGVLKLLDPSMSQ</sequence>
<organism>
    <name type="scientific">Mus musculus</name>
    <name type="common">Mouse</name>
    <dbReference type="NCBI Taxonomy" id="10090"/>
    <lineage>
        <taxon>Eukaryota</taxon>
        <taxon>Metazoa</taxon>
        <taxon>Chordata</taxon>
        <taxon>Craniata</taxon>
        <taxon>Vertebrata</taxon>
        <taxon>Euteleostomi</taxon>
        <taxon>Mammalia</taxon>
        <taxon>Eutheria</taxon>
        <taxon>Euarchontoglires</taxon>
        <taxon>Glires</taxon>
        <taxon>Rodentia</taxon>
        <taxon>Myomorpha</taxon>
        <taxon>Muroidea</taxon>
        <taxon>Muridae</taxon>
        <taxon>Murinae</taxon>
        <taxon>Mus</taxon>
        <taxon>Mus</taxon>
    </lineage>
</organism>
<gene>
    <name type="primary">Fpgs</name>
</gene>
<reference key="1">
    <citation type="journal article" date="1995" name="J. Biol. Chem.">
        <title>Different antifolate-resistant L1210 cell variants with either increased or decreased folylpolyglutamate synthetase gene expression at the level of mRNA transcription.</title>
        <authorList>
            <person name="Roy K."/>
            <person name="Mitsugi K."/>
            <person name="Sirlin S."/>
            <person name="Shane B."/>
            <person name="Sirotnak F.M."/>
        </authorList>
    </citation>
    <scope>NUCLEOTIDE SEQUENCE [MRNA] (ISOFORM 1)</scope>
    <scope>CATALYTIC ACTIVITY</scope>
</reference>
<reference key="2">
    <citation type="journal article" date="1996" name="Biochim. Biophys. Acta">
        <title>Molecular cloning of murine folylpoly-gamma-glutamate synthetase.</title>
        <authorList>
            <person name="Spinella M.J."/>
            <person name="Brigle K.E."/>
            <person name="Goldman I.D."/>
        </authorList>
    </citation>
    <scope>NUCLEOTIDE SEQUENCE [MRNA] (ISOFORM 1)</scope>
    <scope>ALTERNATIVE INITIATION</scope>
    <source>
        <strain>DBA/2J</strain>
    </source>
</reference>
<reference key="3">
    <citation type="journal article" date="1996" name="J. Biol. Chem.">
        <title>Organization and alternate splicing of the murine folylpolyglutamate synthetase gene. Different splice variants in L1210 cells encode mitochondrial or cytosolic forms of the enzyme.</title>
        <authorList>
            <person name="Roy K."/>
            <person name="Mitsugi K."/>
            <person name="Sirotnak F.M."/>
        </authorList>
    </citation>
    <scope>NUCLEOTIDE SEQUENCE [MRNA] (ISOFORM 1)</scope>
    <scope>ALTERNATIVE SPLICING</scope>
    <scope>ALTERNATIVE INITIATION</scope>
</reference>
<reference key="4">
    <citation type="journal article" date="1997" name="J. Biol. Chem.">
        <title>Additional organizational features of the murine folylpolyglutamate synthetase gene. Two remotely situated exons encoding an alternate 5' end and proximal open rea ding frame under the control of a second promoter.</title>
        <authorList>
            <person name="Roy K."/>
            <person name="Mitsugi K."/>
            <person name="Sirotnak F.M."/>
        </authorList>
    </citation>
    <scope>NUCLEOTIDE SEQUENCE [MRNA] (ISOFORM 1)</scope>
    <scope>ALTERNATIVE PROMOTER USAGE</scope>
    <scope>ALTERNATIVE SPLICING</scope>
    <scope>ALTERNATIVE INITIATION</scope>
    <scope>TISSUE SPECIFICITY</scope>
</reference>
<reference key="5">
    <citation type="journal article" date="2005" name="Science">
        <title>The transcriptional landscape of the mammalian genome.</title>
        <authorList>
            <person name="Carninci P."/>
            <person name="Kasukawa T."/>
            <person name="Katayama S."/>
            <person name="Gough J."/>
            <person name="Frith M.C."/>
            <person name="Maeda N."/>
            <person name="Oyama R."/>
            <person name="Ravasi T."/>
            <person name="Lenhard B."/>
            <person name="Wells C."/>
            <person name="Kodzius R."/>
            <person name="Shimokawa K."/>
            <person name="Bajic V.B."/>
            <person name="Brenner S.E."/>
            <person name="Batalov S."/>
            <person name="Forrest A.R."/>
            <person name="Zavolan M."/>
            <person name="Davis M.J."/>
            <person name="Wilming L.G."/>
            <person name="Aidinis V."/>
            <person name="Allen J.E."/>
            <person name="Ambesi-Impiombato A."/>
            <person name="Apweiler R."/>
            <person name="Aturaliya R.N."/>
            <person name="Bailey T.L."/>
            <person name="Bansal M."/>
            <person name="Baxter L."/>
            <person name="Beisel K.W."/>
            <person name="Bersano T."/>
            <person name="Bono H."/>
            <person name="Chalk A.M."/>
            <person name="Chiu K.P."/>
            <person name="Choudhary V."/>
            <person name="Christoffels A."/>
            <person name="Clutterbuck D.R."/>
            <person name="Crowe M.L."/>
            <person name="Dalla E."/>
            <person name="Dalrymple B.P."/>
            <person name="de Bono B."/>
            <person name="Della Gatta G."/>
            <person name="di Bernardo D."/>
            <person name="Down T."/>
            <person name="Engstrom P."/>
            <person name="Fagiolini M."/>
            <person name="Faulkner G."/>
            <person name="Fletcher C.F."/>
            <person name="Fukushima T."/>
            <person name="Furuno M."/>
            <person name="Futaki S."/>
            <person name="Gariboldi M."/>
            <person name="Georgii-Hemming P."/>
            <person name="Gingeras T.R."/>
            <person name="Gojobori T."/>
            <person name="Green R.E."/>
            <person name="Gustincich S."/>
            <person name="Harbers M."/>
            <person name="Hayashi Y."/>
            <person name="Hensch T.K."/>
            <person name="Hirokawa N."/>
            <person name="Hill D."/>
            <person name="Huminiecki L."/>
            <person name="Iacono M."/>
            <person name="Ikeo K."/>
            <person name="Iwama A."/>
            <person name="Ishikawa T."/>
            <person name="Jakt M."/>
            <person name="Kanapin A."/>
            <person name="Katoh M."/>
            <person name="Kawasawa Y."/>
            <person name="Kelso J."/>
            <person name="Kitamura H."/>
            <person name="Kitano H."/>
            <person name="Kollias G."/>
            <person name="Krishnan S.P."/>
            <person name="Kruger A."/>
            <person name="Kummerfeld S.K."/>
            <person name="Kurochkin I.V."/>
            <person name="Lareau L.F."/>
            <person name="Lazarevic D."/>
            <person name="Lipovich L."/>
            <person name="Liu J."/>
            <person name="Liuni S."/>
            <person name="McWilliam S."/>
            <person name="Madan Babu M."/>
            <person name="Madera M."/>
            <person name="Marchionni L."/>
            <person name="Matsuda H."/>
            <person name="Matsuzawa S."/>
            <person name="Miki H."/>
            <person name="Mignone F."/>
            <person name="Miyake S."/>
            <person name="Morris K."/>
            <person name="Mottagui-Tabar S."/>
            <person name="Mulder N."/>
            <person name="Nakano N."/>
            <person name="Nakauchi H."/>
            <person name="Ng P."/>
            <person name="Nilsson R."/>
            <person name="Nishiguchi S."/>
            <person name="Nishikawa S."/>
            <person name="Nori F."/>
            <person name="Ohara O."/>
            <person name="Okazaki Y."/>
            <person name="Orlando V."/>
            <person name="Pang K.C."/>
            <person name="Pavan W.J."/>
            <person name="Pavesi G."/>
            <person name="Pesole G."/>
            <person name="Petrovsky N."/>
            <person name="Piazza S."/>
            <person name="Reed J."/>
            <person name="Reid J.F."/>
            <person name="Ring B.Z."/>
            <person name="Ringwald M."/>
            <person name="Rost B."/>
            <person name="Ruan Y."/>
            <person name="Salzberg S.L."/>
            <person name="Sandelin A."/>
            <person name="Schneider C."/>
            <person name="Schoenbach C."/>
            <person name="Sekiguchi K."/>
            <person name="Semple C.A."/>
            <person name="Seno S."/>
            <person name="Sessa L."/>
            <person name="Sheng Y."/>
            <person name="Shibata Y."/>
            <person name="Shimada H."/>
            <person name="Shimada K."/>
            <person name="Silva D."/>
            <person name="Sinclair B."/>
            <person name="Sperling S."/>
            <person name="Stupka E."/>
            <person name="Sugiura K."/>
            <person name="Sultana R."/>
            <person name="Takenaka Y."/>
            <person name="Taki K."/>
            <person name="Tammoja K."/>
            <person name="Tan S.L."/>
            <person name="Tang S."/>
            <person name="Taylor M.S."/>
            <person name="Tegner J."/>
            <person name="Teichmann S.A."/>
            <person name="Ueda H.R."/>
            <person name="van Nimwegen E."/>
            <person name="Verardo R."/>
            <person name="Wei C.L."/>
            <person name="Yagi K."/>
            <person name="Yamanishi H."/>
            <person name="Zabarovsky E."/>
            <person name="Zhu S."/>
            <person name="Zimmer A."/>
            <person name="Hide W."/>
            <person name="Bult C."/>
            <person name="Grimmond S.M."/>
            <person name="Teasdale R.D."/>
            <person name="Liu E.T."/>
            <person name="Brusic V."/>
            <person name="Quackenbush J."/>
            <person name="Wahlestedt C."/>
            <person name="Mattick J.S."/>
            <person name="Hume D.A."/>
            <person name="Kai C."/>
            <person name="Sasaki D."/>
            <person name="Tomaru Y."/>
            <person name="Fukuda S."/>
            <person name="Kanamori-Katayama M."/>
            <person name="Suzuki M."/>
            <person name="Aoki J."/>
            <person name="Arakawa T."/>
            <person name="Iida J."/>
            <person name="Imamura K."/>
            <person name="Itoh M."/>
            <person name="Kato T."/>
            <person name="Kawaji H."/>
            <person name="Kawagashira N."/>
            <person name="Kawashima T."/>
            <person name="Kojima M."/>
            <person name="Kondo S."/>
            <person name="Konno H."/>
            <person name="Nakano K."/>
            <person name="Ninomiya N."/>
            <person name="Nishio T."/>
            <person name="Okada M."/>
            <person name="Plessy C."/>
            <person name="Shibata K."/>
            <person name="Shiraki T."/>
            <person name="Suzuki S."/>
            <person name="Tagami M."/>
            <person name="Waki K."/>
            <person name="Watahiki A."/>
            <person name="Okamura-Oho Y."/>
            <person name="Suzuki H."/>
            <person name="Kawai J."/>
            <person name="Hayashizaki Y."/>
        </authorList>
    </citation>
    <scope>NUCLEOTIDE SEQUENCE [LARGE SCALE MRNA] (ISOFORM 1)</scope>
    <source>
        <strain>NOD</strain>
        <tissue>Spleen</tissue>
    </source>
</reference>
<reference key="6">
    <citation type="journal article" date="2009" name="PLoS Biol.">
        <title>Lineage-specific biology revealed by a finished genome assembly of the mouse.</title>
        <authorList>
            <person name="Church D.M."/>
            <person name="Goodstadt L."/>
            <person name="Hillier L.W."/>
            <person name="Zody M.C."/>
            <person name="Goldstein S."/>
            <person name="She X."/>
            <person name="Bult C.J."/>
            <person name="Agarwala R."/>
            <person name="Cherry J.L."/>
            <person name="DiCuccio M."/>
            <person name="Hlavina W."/>
            <person name="Kapustin Y."/>
            <person name="Meric P."/>
            <person name="Maglott D."/>
            <person name="Birtle Z."/>
            <person name="Marques A.C."/>
            <person name="Graves T."/>
            <person name="Zhou S."/>
            <person name="Teague B."/>
            <person name="Potamousis K."/>
            <person name="Churas C."/>
            <person name="Place M."/>
            <person name="Herschleb J."/>
            <person name="Runnheim R."/>
            <person name="Forrest D."/>
            <person name="Amos-Landgraf J."/>
            <person name="Schwartz D.C."/>
            <person name="Cheng Z."/>
            <person name="Lindblad-Toh K."/>
            <person name="Eichler E.E."/>
            <person name="Ponting C.P."/>
        </authorList>
    </citation>
    <scope>NUCLEOTIDE SEQUENCE [LARGE SCALE GENOMIC DNA]</scope>
    <source>
        <strain>C57BL/6J</strain>
    </source>
</reference>
<reference key="7">
    <citation type="submission" date="2005-07" db="EMBL/GenBank/DDBJ databases">
        <authorList>
            <person name="Mural R.J."/>
            <person name="Adams M.D."/>
            <person name="Myers E.W."/>
            <person name="Smith H.O."/>
            <person name="Venter J.C."/>
        </authorList>
    </citation>
    <scope>NUCLEOTIDE SEQUENCE [LARGE SCALE GENOMIC DNA]</scope>
</reference>
<reference key="8">
    <citation type="journal article" date="2004" name="Genome Res.">
        <title>The status, quality, and expansion of the NIH full-length cDNA project: the Mammalian Gene Collection (MGC).</title>
        <authorList>
            <consortium name="The MGC Project Team"/>
        </authorList>
    </citation>
    <scope>NUCLEOTIDE SEQUENCE [LARGE SCALE MRNA] OF 4-587 (ISOFORM 1)</scope>
    <source>
        <tissue>Mammary tumor</tissue>
    </source>
</reference>
<reference key="9">
    <citation type="journal article" date="1984" name="Biochemistry">
        <title>Mammalian folyl polyglutamate synthetase: partial purification and properties of the mouse liver enzyme.</title>
        <authorList>
            <person name="Moran R.G."/>
            <person name="Colman P.D."/>
        </authorList>
    </citation>
    <scope>FUNCTION</scope>
    <scope>CATALYTIC ACTIVITY</scope>
    <scope>ACTIVITY REGULATION</scope>
    <scope>BIOPHYSICOCHEMICAL PROPERTIES</scope>
    <scope>SUBSTRATE SPECIFICITY</scope>
</reference>
<reference key="10">
    <citation type="journal article" date="1999" name="Cancer Res.">
        <title>Tissue-specific expression of functional isoforms of mouse folypoly-gamma-glutamae synthetase: a basis for targeting folate antimetabolites.</title>
        <authorList>
            <person name="Turner F.B."/>
            <person name="Andreassi J.L."/>
            <person name="Ferguson J."/>
            <person name="Titus S."/>
            <person name="Tse A."/>
            <person name="Taylor S.M."/>
            <person name="Moran R.G."/>
        </authorList>
    </citation>
    <scope>ENZYME KINETICS</scope>
    <scope>SUBSTRATE SPECIFICITY</scope>
    <scope>TISSUE SPECIFICITY</scope>
</reference>
<reference key="11">
    <citation type="journal article" date="2002" name="Biochemistry">
        <title>Mouse folylpoly-gamma-glutamate synthetase isoforms respond differently to feedback inhibition by folylpolyglutamate cofactors.</title>
        <authorList>
            <person name="Andreassi J.L. II"/>
            <person name="Moran R.G."/>
        </authorList>
    </citation>
    <scope>FUNCTION</scope>
    <scope>CATALYTIC ACTIVITY</scope>
    <scope>ACTIVITY REGULATION</scope>
    <scope>BIOPHYSICOCHEMICAL PROPERTIES</scope>
    <scope>ENZYME KINETICS</scope>
</reference>
<reference key="12">
    <citation type="journal article" date="2008" name="Mol. Cell. Biol.">
        <title>A mouse gene that coordinates epigenetic controls and transcriptional interference to achieve tissue-specific expression.</title>
        <authorList>
            <person name="Racanelli A.C."/>
            <person name="Turner F.B."/>
            <person name="Xie L.Y."/>
            <person name="Taylor S.M."/>
            <person name="Moran R.G."/>
        </authorList>
    </citation>
    <scope>ALTERNATIVE PROMOTER USAGE</scope>
    <scope>TISSUE SPECIFICITY</scope>
</reference>
<proteinExistence type="evidence at protein level"/>
<name>FOLC_MOUSE</name>
<comment type="function">
    <text evidence="5 7">Catalyzes conversion of folates to polyglutamate derivatives allowing concentration of folate compounds in the cell and the intracellular retention of these cofactors, which are important substrates for most of the folate-dependent enzymes that are involved in one-carbon transfer reactions involved in purine, pyrimidine and amino acid synthesis. Dihydrofolate, tetrahydrofolate, 5,10-methylenetetrahydrofolate, 10-formyltetrahydrofolate and 5-formyltetrahydrofolate are the best substrates. Folic acid and 5-methyltetrahydrofolate can also act as substrates.</text>
</comment>
<comment type="catalytic activity">
    <reaction evidence="5 7 8">
        <text>(6S)-5,6,7,8-tetrahydrofolyl-(gamma-L-Glu)(n) + L-glutamate + ATP = (6S)-5,6,7,8-tetrahydrofolyl-(gamma-L-Glu)(n+1) + ADP + phosphate + H(+)</text>
        <dbReference type="Rhea" id="RHEA:10580"/>
        <dbReference type="Rhea" id="RHEA-COMP:14738"/>
        <dbReference type="Rhea" id="RHEA-COMP:14740"/>
        <dbReference type="ChEBI" id="CHEBI:15378"/>
        <dbReference type="ChEBI" id="CHEBI:29985"/>
        <dbReference type="ChEBI" id="CHEBI:30616"/>
        <dbReference type="ChEBI" id="CHEBI:43474"/>
        <dbReference type="ChEBI" id="CHEBI:141005"/>
        <dbReference type="ChEBI" id="CHEBI:456216"/>
        <dbReference type="EC" id="6.3.2.17"/>
    </reaction>
</comment>
<comment type="cofactor">
    <cofactor evidence="1">
        <name>a monovalent cation</name>
        <dbReference type="ChEBI" id="CHEBI:60242"/>
    </cofactor>
    <text evidence="1">A monovalent cation.</text>
</comment>
<comment type="activity regulation">
    <text evidence="5 7">Inhibited by ammonium sulfate. Inhibited by pentaglutamate derivative of DDATHF, but isoform 2 is inhibited to a greater extent at lower concentrations of the compound that is isoform 5. Isoform 5 is virtually unaffected by H(4)PteGlu(5) and 5,10-CH(2)-H(4)PteGlu(5) at concentrations that substantially inhibits the activity of isoform 2. Isoform 2 and 5 are equally sensitive to polyglutamates of 10-CHO-H(4)-PteGlu.</text>
</comment>
<comment type="biophysicochemical properties">
    <kinetics>
        <KM evidence="5 7">17.7 uM for aminopterin (isoform 5 at 34 degrees Celsius and pH 8.9)</KM>
        <KM evidence="5 7">15.4 uM for aminopterin (isoform 2 at 34 degrees Celsius and pH 8.9)</KM>
        <KM evidence="5 7">7.6 uM for (6R)-DDATHF (isoform 5 at 34 degrees Celsius and pH 8.9)</KM>
        <KM evidence="5 7">1.2 uM for (6R)-DDATHF (isoform 2 at 34 degrees Celsius and pH 8.9)</KM>
        <KM evidence="5 7">6.3 uM for (6S)-H(4)PteGlu (isoform 5 at 34 degrees Celsius and pH 8.9)</KM>
        <KM evidence="5 7">1.4 uM for (6S)-H(4)PteGlu (isoform 2 at 34 degrees Celsius and pH 8.9)</KM>
        <KM evidence="5 7">2.9 uM for (6R)-10-CHO-H(4)PteGlu (isoform 5 at 34 degrees Celsius and pH 8.9)</KM>
        <KM evidence="5 7">2 uM for (6R)-10-CHO-H(4)PteGlu (isoform 2 at 34 degrees Celsius and pH 8.9)</KM>
        <KM evidence="5 7">64 uM for (6S)-5-CH(3)-H(4)PteGlu (isoform 5 at 34 degrees Celsius and pH 8.9)</KM>
        <KM evidence="5 7">54 uM for (6S)-5-CH(3)-H(4)PteGlu (isoform 2 at 34 degrees Celsius and pH 8.9)</KM>
        <KM evidence="5 7">122 uM for (6S)-5-CHO-H(4)PteGlu (isoform 5 at 34 degrees Celsius and pH 8.9)</KM>
        <KM evidence="5 7">75 uM for (6S)-5-CHO-H(4)PteGlu (isoform 2 at 34 degrees Celsius and pH 8.9)</KM>
    </kinetics>
    <phDependence>
        <text evidence="5 7">Optimum pH is 8.2-9.5 using 500 uM folic acid (PteGlu) and 25 uM dl-5-formyltetrahydrofolate (dl-5-CHO-H(4)PteGlu) as substrates.</text>
    </phDependence>
    <temperatureDependence>
        <text evidence="5 7">Optimum temperature is 37 degrees Celsius. Activity completely lost within a few hours at 4 degrees Celsius in the absence of ATP and glycerol.</text>
    </temperatureDependence>
</comment>
<comment type="pathway">
    <text>Cofactor biosynthesis; tetrahydrofolylpolyglutamate biosynthesis.</text>
</comment>
<comment type="subunit">
    <text evidence="1">Monomer.</text>
</comment>
<comment type="subcellular location">
    <molecule>Isoform 1</molecule>
    <subcellularLocation>
        <location evidence="3">Mitochondrion inner membrane</location>
    </subcellularLocation>
    <subcellularLocation>
        <location evidence="3">Mitochondrion matrix</location>
    </subcellularLocation>
</comment>
<comment type="subcellular location">
    <molecule>Isoform 2</molecule>
    <subcellularLocation>
        <location evidence="3">Cytoplasm</location>
    </subcellularLocation>
</comment>
<comment type="alternative products">
    <event type="alternative promoter"/>
    <event type="alternative splicing"/>
    <event type="alternative initiation"/>
    <isoform>
        <id>P48760-1</id>
        <name>1</name>
        <name>Mitochondrial</name>
        <sequence type="displayed"/>
    </isoform>
    <isoform>
        <id>P48760-2</id>
        <name>2</name>
        <name>Cytoplasmic</name>
        <sequence type="described" ref="VSP_018734"/>
    </isoform>
    <isoform>
        <id>P48760-3</id>
        <name>3</name>
        <sequence type="described" ref="VSP_041961"/>
    </isoform>
    <isoform>
        <id>P48760-4</id>
        <name>4</name>
        <sequence type="described" ref="VSP_041962"/>
    </isoform>
    <isoform>
        <id>P48760-5</id>
        <name>5</name>
        <sequence type="described" ref="VSP_041967"/>
    </isoform>
</comment>
<comment type="tissue specificity">
    <text evidence="4 6 9">With non-specific probe, highest content in kidney and liver and lowest in spleen, lung and small intestine, and readily detectable in all of the tumors except hepatoma. Isoform 1 and isoform 2 expressed in leukemic cells and isoform 4 and isoform 5 in liver cells. Isoform 1 and isoform 2 exclusively expressed in hepatoma and Lewis lung carcinoma. Isoform 1 and isoform 2 also expressed in bone marrow, small intestine and spleen. Kidney expresses isoform 1, isoform 2, isoform 4 and isoform 5.</text>
</comment>
<comment type="miscellaneous">
    <molecule>Isoform 2</molecule>
    <text evidence="10">Produced by alternative initiation at Met-43 of isoform 1.</text>
</comment>
<comment type="miscellaneous">
    <molecule>Isoform 3</molecule>
    <text evidence="10">Produced by alternative splicing of isoform 1.</text>
</comment>
<comment type="miscellaneous">
    <molecule>Isoform 4</molecule>
    <text evidence="10">Produced by alternative promoter usage.</text>
</comment>
<comment type="miscellaneous">
    <molecule>Isoform 5</molecule>
    <text evidence="10">Produced by alternative initiation at Met-24 of isoform 4.</text>
</comment>
<comment type="similarity">
    <text evidence="10">Belongs to the folylpolyglutamate synthase family.</text>
</comment>
<comment type="sequence caution" evidence="10">
    <conflict type="erroneous initiation">
        <sequence resource="EMBL-CDS" id="AAH05484"/>
    </conflict>
    <text>Truncated N-terminus.</text>
</comment>
<dbReference type="EC" id="6.3.2.17"/>
<dbReference type="EMBL" id="U33557">
    <property type="protein sequence ID" value="AAC52812.1"/>
    <property type="molecule type" value="mRNA"/>
</dbReference>
<dbReference type="EMBL" id="U32197">
    <property type="protein sequence ID" value="AAC52426.1"/>
    <property type="molecule type" value="mRNA"/>
</dbReference>
<dbReference type="EMBL" id="AK157040">
    <property type="protein sequence ID" value="BAE33941.1"/>
    <property type="molecule type" value="mRNA"/>
</dbReference>
<dbReference type="EMBL" id="AL772271">
    <property type="status" value="NOT_ANNOTATED_CDS"/>
    <property type="molecule type" value="Genomic_DNA"/>
</dbReference>
<dbReference type="EMBL" id="CH466542">
    <property type="protein sequence ID" value="EDL08563.1"/>
    <property type="molecule type" value="Genomic_DNA"/>
</dbReference>
<dbReference type="EMBL" id="BC005484">
    <property type="protein sequence ID" value="AAH05484.1"/>
    <property type="status" value="ALT_INIT"/>
    <property type="molecule type" value="mRNA"/>
</dbReference>
<dbReference type="CCDS" id="CCDS15926.1">
    <molecule id="P48760-1"/>
</dbReference>
<dbReference type="PIR" id="I49357">
    <property type="entry name" value="I49357"/>
</dbReference>
<dbReference type="PIR" id="S65755">
    <property type="entry name" value="S65755"/>
</dbReference>
<dbReference type="RefSeq" id="NP_034366.2">
    <molecule id="P48760-1"/>
    <property type="nucleotide sequence ID" value="NM_010236.3"/>
</dbReference>
<dbReference type="SMR" id="P48760"/>
<dbReference type="BioGRID" id="199731">
    <property type="interactions" value="1"/>
</dbReference>
<dbReference type="FunCoup" id="P48760">
    <property type="interactions" value="2103"/>
</dbReference>
<dbReference type="IntAct" id="P48760">
    <property type="interactions" value="1"/>
</dbReference>
<dbReference type="STRING" id="10090.ENSMUSP00000028148"/>
<dbReference type="BindingDB" id="P48760"/>
<dbReference type="ChEMBL" id="CHEMBL2890"/>
<dbReference type="DrugCentral" id="P48760"/>
<dbReference type="iPTMnet" id="P48760"/>
<dbReference type="PhosphoSitePlus" id="P48760"/>
<dbReference type="PaxDb" id="10090-ENSMUSP00000028148"/>
<dbReference type="PeptideAtlas" id="P48760"/>
<dbReference type="ProteomicsDB" id="267506">
    <molecule id="P48760-1"/>
</dbReference>
<dbReference type="ProteomicsDB" id="267507">
    <molecule id="P48760-2"/>
</dbReference>
<dbReference type="ProteomicsDB" id="267508">
    <molecule id="P48760-3"/>
</dbReference>
<dbReference type="ProteomicsDB" id="267509">
    <molecule id="P48760-4"/>
</dbReference>
<dbReference type="ProteomicsDB" id="267510">
    <molecule id="P48760-5"/>
</dbReference>
<dbReference type="Pumba" id="P48760"/>
<dbReference type="Antibodypedia" id="30819">
    <property type="antibodies" value="164 antibodies from 24 providers"/>
</dbReference>
<dbReference type="DNASU" id="14287"/>
<dbReference type="Ensembl" id="ENSMUST00000028148.11">
    <molecule id="P48760-1"/>
    <property type="protein sequence ID" value="ENSMUSP00000028148.5"/>
    <property type="gene ID" value="ENSMUSG00000009566.13"/>
</dbReference>
<dbReference type="GeneID" id="14287"/>
<dbReference type="KEGG" id="mmu:14287"/>
<dbReference type="UCSC" id="uc008jgm.2">
    <molecule id="P48760-1"/>
    <property type="organism name" value="mouse"/>
</dbReference>
<dbReference type="AGR" id="MGI:95576"/>
<dbReference type="CTD" id="2356"/>
<dbReference type="MGI" id="MGI:95576">
    <property type="gene designation" value="Fpgs"/>
</dbReference>
<dbReference type="VEuPathDB" id="HostDB:ENSMUSG00000009566"/>
<dbReference type="eggNOG" id="KOG2525">
    <property type="taxonomic scope" value="Eukaryota"/>
</dbReference>
<dbReference type="GeneTree" id="ENSGT00390000016526"/>
<dbReference type="HOGENOM" id="CLU_015869_0_2_1"/>
<dbReference type="InParanoid" id="P48760"/>
<dbReference type="OMA" id="ESLDCCM"/>
<dbReference type="OrthoDB" id="5212574at2759"/>
<dbReference type="PhylomeDB" id="P48760"/>
<dbReference type="TreeFam" id="TF313956"/>
<dbReference type="BRENDA" id="6.3.2.17">
    <property type="organism ID" value="3474"/>
</dbReference>
<dbReference type="Reactome" id="R-MMU-196757">
    <property type="pathway name" value="Metabolism of folate and pterines"/>
</dbReference>
<dbReference type="UniPathway" id="UPA00850"/>
<dbReference type="BioGRID-ORCS" id="14287">
    <property type="hits" value="19 hits in 80 CRISPR screens"/>
</dbReference>
<dbReference type="PRO" id="PR:P48760"/>
<dbReference type="Proteomes" id="UP000000589">
    <property type="component" value="Chromosome 2"/>
</dbReference>
<dbReference type="RNAct" id="P48760">
    <property type="molecule type" value="protein"/>
</dbReference>
<dbReference type="Bgee" id="ENSMUSG00000009566">
    <property type="expression patterns" value="Expressed in left lobe of liver and 209 other cell types or tissues"/>
</dbReference>
<dbReference type="ExpressionAtlas" id="P48760">
    <property type="expression patterns" value="baseline and differential"/>
</dbReference>
<dbReference type="GO" id="GO:0005829">
    <property type="term" value="C:cytosol"/>
    <property type="evidence" value="ECO:0000314"/>
    <property type="project" value="MGI"/>
</dbReference>
<dbReference type="GO" id="GO:0005743">
    <property type="term" value="C:mitochondrial inner membrane"/>
    <property type="evidence" value="ECO:0007669"/>
    <property type="project" value="UniProtKB-SubCell"/>
</dbReference>
<dbReference type="GO" id="GO:0005759">
    <property type="term" value="C:mitochondrial matrix"/>
    <property type="evidence" value="ECO:0000314"/>
    <property type="project" value="MGI"/>
</dbReference>
<dbReference type="GO" id="GO:0005739">
    <property type="term" value="C:mitochondrion"/>
    <property type="evidence" value="ECO:0007005"/>
    <property type="project" value="MGI"/>
</dbReference>
<dbReference type="GO" id="GO:0005524">
    <property type="term" value="F:ATP binding"/>
    <property type="evidence" value="ECO:0007669"/>
    <property type="project" value="UniProtKB-KW"/>
</dbReference>
<dbReference type="GO" id="GO:0046872">
    <property type="term" value="F:metal ion binding"/>
    <property type="evidence" value="ECO:0007669"/>
    <property type="project" value="UniProtKB-KW"/>
</dbReference>
<dbReference type="GO" id="GO:0004326">
    <property type="term" value="F:tetrahydrofolylpolyglutamate synthase activity"/>
    <property type="evidence" value="ECO:0000314"/>
    <property type="project" value="MGI"/>
</dbReference>
<dbReference type="GO" id="GO:0006536">
    <property type="term" value="P:glutamate metabolic process"/>
    <property type="evidence" value="ECO:0007669"/>
    <property type="project" value="Ensembl"/>
</dbReference>
<dbReference type="GO" id="GO:0006730">
    <property type="term" value="P:one-carbon metabolic process"/>
    <property type="evidence" value="ECO:0007669"/>
    <property type="project" value="UniProtKB-KW"/>
</dbReference>
<dbReference type="GO" id="GO:0046901">
    <property type="term" value="P:tetrahydrofolylpolyglutamate biosynthetic process"/>
    <property type="evidence" value="ECO:0000314"/>
    <property type="project" value="MGI"/>
</dbReference>
<dbReference type="FunFam" id="3.40.1190.10:FF:000005">
    <property type="entry name" value="Folylpolyglutamate synthase"/>
    <property type="match status" value="1"/>
</dbReference>
<dbReference type="FunFam" id="3.90.190.20:FF:000007">
    <property type="entry name" value="Folylpolyglutamate synthase"/>
    <property type="match status" value="1"/>
</dbReference>
<dbReference type="Gene3D" id="3.90.190.20">
    <property type="entry name" value="Mur ligase, C-terminal domain"/>
    <property type="match status" value="1"/>
</dbReference>
<dbReference type="Gene3D" id="3.40.1190.10">
    <property type="entry name" value="Mur-like, catalytic domain"/>
    <property type="match status" value="1"/>
</dbReference>
<dbReference type="InterPro" id="IPR001645">
    <property type="entry name" value="Folylpolyglutamate_synth"/>
</dbReference>
<dbReference type="InterPro" id="IPR018109">
    <property type="entry name" value="Folylpolyglutamate_synth_CS"/>
</dbReference>
<dbReference type="InterPro" id="IPR023600">
    <property type="entry name" value="Folylpolyglutamate_synth_euk"/>
</dbReference>
<dbReference type="InterPro" id="IPR036565">
    <property type="entry name" value="Mur-like_cat_sf"/>
</dbReference>
<dbReference type="InterPro" id="IPR036615">
    <property type="entry name" value="Mur_ligase_C_dom_sf"/>
</dbReference>
<dbReference type="NCBIfam" id="TIGR01499">
    <property type="entry name" value="folC"/>
    <property type="match status" value="1"/>
</dbReference>
<dbReference type="PANTHER" id="PTHR11136:SF5">
    <property type="entry name" value="FOLYLPOLYGLUTAMATE SYNTHASE, MITOCHONDRIAL"/>
    <property type="match status" value="1"/>
</dbReference>
<dbReference type="PANTHER" id="PTHR11136">
    <property type="entry name" value="FOLYLPOLYGLUTAMATE SYNTHASE-RELATED"/>
    <property type="match status" value="1"/>
</dbReference>
<dbReference type="PIRSF" id="PIRSF038895">
    <property type="entry name" value="FPGS"/>
    <property type="match status" value="1"/>
</dbReference>
<dbReference type="SUPFAM" id="SSF53623">
    <property type="entry name" value="MurD-like peptide ligases, catalytic domain"/>
    <property type="match status" value="1"/>
</dbReference>
<dbReference type="SUPFAM" id="SSF53244">
    <property type="entry name" value="MurD-like peptide ligases, peptide-binding domain"/>
    <property type="match status" value="1"/>
</dbReference>
<dbReference type="PROSITE" id="PS01011">
    <property type="entry name" value="FOLYLPOLYGLU_SYNT_1"/>
    <property type="match status" value="1"/>
</dbReference>
<dbReference type="PROSITE" id="PS01012">
    <property type="entry name" value="FOLYLPOLYGLU_SYNT_2"/>
    <property type="match status" value="1"/>
</dbReference>